<proteinExistence type="inferred from homology"/>
<name>NSP5_ROTHC</name>
<feature type="chain" id="PRO_0000149643" description="Non-structural protein 5">
    <location>
        <begin position="1"/>
        <end position="212"/>
    </location>
</feature>
<feature type="binding site" evidence="1">
    <location>
        <position position="86"/>
    </location>
    <ligand>
        <name>Mg(2+)</name>
        <dbReference type="ChEBI" id="CHEBI:18420"/>
    </ligand>
</feature>
<comment type="function">
    <text evidence="1">Plays an essential role in the viral genome replication. Participates, together with NSP2, in the formation of viral factories (viroplasms) which are large inclusions in the host cytoplasm where replication intermediates are assembled and viral RNA replication takes place. Orchestrates the recruitment of viroplasmic proteins such as capsid proteins to these factories.</text>
</comment>
<comment type="cofactor">
    <cofactor evidence="1">
        <name>Mg(2+)</name>
        <dbReference type="ChEBI" id="CHEBI:18420"/>
    </cofactor>
</comment>
<comment type="subunit">
    <text evidence="1">Homodimer. Interacts with VP1. Interacts with VP2. Interacts with NSP2 and NSP6.</text>
</comment>
<comment type="subcellular location">
    <subcellularLocation>
        <location evidence="1">Host cytoplasm</location>
    </subcellularLocation>
    <text evidence="1">Found in spherical cytoplasmic structures, called virus factories, that appear early after infection and are the site of viral replication and packaging.</text>
</comment>
<comment type="PTM">
    <text evidence="1">O-glycosylated.</text>
</comment>
<comment type="similarity">
    <text evidence="1">Belongs to the rotavirus NSP5 family.</text>
</comment>
<accession>Q00682</accession>
<evidence type="ECO:0000255" key="1">
    <source>
        <dbReference type="HAMAP-Rule" id="MF_04092"/>
    </source>
</evidence>
<reference key="1">
    <citation type="journal article" date="1992" name="J. Virol.">
        <title>Cloning of noncultivatable human rotavirus by single primer amplification.</title>
        <authorList>
            <person name="Lambden P.R."/>
            <person name="Cooke S.J."/>
            <person name="Caul E.O."/>
            <person name="Clarke I.N."/>
        </authorList>
    </citation>
    <scope>NUCLEOTIDE SEQUENCE [GENOMIC RNA]</scope>
</reference>
<sequence>MSDFGINLDAICDNVKKGQTESRTGSQLSNRSSRRMDFVDDEELSTYFNSKASVTQSDSCSNDLEIKHSIITEAVVCDESAHVSADAIQEKDETVPQMDHRIMKWMLDSHDGVSLNGGINFTKAKSKLKETENEITEMKSKTNLLVNASVGINSNVGAFNPINQTIKTEAVSDMFEDEDIEGCICKNCPYREKYRKLRSKMKNVLIDMINEM</sequence>
<dbReference type="EMBL" id="M81488">
    <property type="protein sequence ID" value="AAA47354.1"/>
    <property type="molecule type" value="Genomic_RNA"/>
</dbReference>
<dbReference type="PIR" id="A42188">
    <property type="entry name" value="MNXRB1"/>
</dbReference>
<dbReference type="RefSeq" id="YP_392511.1">
    <property type="nucleotide sequence ID" value="NC_007569.1"/>
</dbReference>
<dbReference type="IntAct" id="Q00682">
    <property type="interactions" value="1"/>
</dbReference>
<dbReference type="GeneID" id="3773138"/>
<dbReference type="KEGG" id="vg:3773138"/>
<dbReference type="Proteomes" id="UP000007664">
    <property type="component" value="Genome"/>
</dbReference>
<dbReference type="GO" id="GO:0030430">
    <property type="term" value="C:host cell cytoplasm"/>
    <property type="evidence" value="ECO:0007669"/>
    <property type="project" value="UniProtKB-SubCell"/>
</dbReference>
<dbReference type="GO" id="GO:0016887">
    <property type="term" value="F:ATP hydrolysis activity"/>
    <property type="evidence" value="ECO:0007669"/>
    <property type="project" value="UniProtKB-UniRule"/>
</dbReference>
<dbReference type="GO" id="GO:0000287">
    <property type="term" value="F:magnesium ion binding"/>
    <property type="evidence" value="ECO:0007669"/>
    <property type="project" value="UniProtKB-UniRule"/>
</dbReference>
<dbReference type="GO" id="GO:0000166">
    <property type="term" value="F:nucleotide binding"/>
    <property type="evidence" value="ECO:0007669"/>
    <property type="project" value="UniProtKB-UniRule"/>
</dbReference>
<dbReference type="GO" id="GO:0003723">
    <property type="term" value="F:RNA binding"/>
    <property type="evidence" value="ECO:0007669"/>
    <property type="project" value="UniProtKB-UniRule"/>
</dbReference>
<dbReference type="GO" id="GO:0019079">
    <property type="term" value="P:viral genome replication"/>
    <property type="evidence" value="ECO:0007669"/>
    <property type="project" value="UniProtKB-UniRule"/>
</dbReference>
<dbReference type="HAMAP" id="MF_04092">
    <property type="entry name" value="ROTA_NSP5"/>
    <property type="match status" value="1"/>
</dbReference>
<dbReference type="InterPro" id="IPR002512">
    <property type="entry name" value="Rotavirus_A/C_NSP5"/>
</dbReference>
<dbReference type="Pfam" id="PF01525">
    <property type="entry name" value="Rota_NS26"/>
    <property type="match status" value="1"/>
</dbReference>
<dbReference type="PIRSF" id="PIRSF004006">
    <property type="entry name" value="Rota_NS26"/>
    <property type="match status" value="1"/>
</dbReference>
<protein>
    <recommendedName>
        <fullName evidence="1">Non-structural protein 5</fullName>
        <shortName evidence="1">NSP5</shortName>
    </recommendedName>
    <alternativeName>
        <fullName evidence="1">NS26</fullName>
    </alternativeName>
</protein>
<keyword id="KW-0325">Glycoprotein</keyword>
<keyword id="KW-1035">Host cytoplasm</keyword>
<keyword id="KW-0460">Magnesium</keyword>
<keyword id="KW-0479">Metal-binding</keyword>
<keyword id="KW-0547">Nucleotide-binding</keyword>
<keyword id="KW-1185">Reference proteome</keyword>
<keyword id="KW-0694">RNA-binding</keyword>
<organismHost>
    <name type="scientific">Homo sapiens</name>
    <name type="common">Human</name>
    <dbReference type="NCBI Taxonomy" id="9606"/>
</organismHost>
<organism>
    <name type="scientific">Rotavirus C (isolate RVC/Human/United Kingdom/Bristol/1989)</name>
    <name type="common">RV-C</name>
    <dbReference type="NCBI Taxonomy" id="31567"/>
    <lineage>
        <taxon>Viruses</taxon>
        <taxon>Riboviria</taxon>
        <taxon>Orthornavirae</taxon>
        <taxon>Duplornaviricota</taxon>
        <taxon>Resentoviricetes</taxon>
        <taxon>Reovirales</taxon>
        <taxon>Sedoreoviridae</taxon>
        <taxon>Rotavirus</taxon>
        <taxon>Rotavirus C</taxon>
    </lineage>
</organism>